<accession>A3Q0D3</accession>
<feature type="chain" id="PRO_1000145190" description="Urease accessory protein UreG">
    <location>
        <begin position="1"/>
        <end position="230"/>
    </location>
</feature>
<feature type="region of interest" description="Disordered" evidence="2">
    <location>
        <begin position="1"/>
        <end position="31"/>
    </location>
</feature>
<feature type="compositionally biased region" description="Basic residues" evidence="2">
    <location>
        <begin position="14"/>
        <end position="25"/>
    </location>
</feature>
<feature type="binding site" evidence="1">
    <location>
        <begin position="37"/>
        <end position="44"/>
    </location>
    <ligand>
        <name>GTP</name>
        <dbReference type="ChEBI" id="CHEBI:37565"/>
    </ligand>
</feature>
<protein>
    <recommendedName>
        <fullName evidence="1">Urease accessory protein UreG</fullName>
    </recommendedName>
</protein>
<organism>
    <name type="scientific">Mycobacterium sp. (strain JLS)</name>
    <dbReference type="NCBI Taxonomy" id="164757"/>
    <lineage>
        <taxon>Bacteria</taxon>
        <taxon>Bacillati</taxon>
        <taxon>Actinomycetota</taxon>
        <taxon>Actinomycetes</taxon>
        <taxon>Mycobacteriales</taxon>
        <taxon>Mycobacteriaceae</taxon>
        <taxon>Mycobacterium</taxon>
    </lineage>
</organism>
<evidence type="ECO:0000255" key="1">
    <source>
        <dbReference type="HAMAP-Rule" id="MF_01389"/>
    </source>
</evidence>
<evidence type="ECO:0000256" key="2">
    <source>
        <dbReference type="SAM" id="MobiDB-lite"/>
    </source>
</evidence>
<comment type="function">
    <text evidence="1">Facilitates the functional incorporation of the urease nickel metallocenter. This process requires GTP hydrolysis, probably effectuated by UreG.</text>
</comment>
<comment type="subunit">
    <text evidence="1">Homodimer. UreD, UreF and UreG form a complex that acts as a GTP-hydrolysis-dependent molecular chaperone, activating the urease apoprotein by helping to assemble the nickel containing metallocenter of UreC. The UreE protein probably delivers the nickel.</text>
</comment>
<comment type="subcellular location">
    <subcellularLocation>
        <location evidence="1">Cytoplasm</location>
    </subcellularLocation>
</comment>
<comment type="similarity">
    <text evidence="1">Belongs to the SIMIBI class G3E GTPase family. UreG subfamily.</text>
</comment>
<reference key="1">
    <citation type="submission" date="2007-02" db="EMBL/GenBank/DDBJ databases">
        <title>Complete sequence of Mycobacterium sp. JLS.</title>
        <authorList>
            <consortium name="US DOE Joint Genome Institute"/>
            <person name="Copeland A."/>
            <person name="Lucas S."/>
            <person name="Lapidus A."/>
            <person name="Barry K."/>
            <person name="Detter J.C."/>
            <person name="Glavina del Rio T."/>
            <person name="Hammon N."/>
            <person name="Israni S."/>
            <person name="Dalin E."/>
            <person name="Tice H."/>
            <person name="Pitluck S."/>
            <person name="Chain P."/>
            <person name="Malfatti S."/>
            <person name="Shin M."/>
            <person name="Vergez L."/>
            <person name="Schmutz J."/>
            <person name="Larimer F."/>
            <person name="Land M."/>
            <person name="Hauser L."/>
            <person name="Kyrpides N."/>
            <person name="Mikhailova N."/>
            <person name="Miller C.D."/>
            <person name="Anderson A.J."/>
            <person name="Sims R.C."/>
            <person name="Richardson P."/>
        </authorList>
    </citation>
    <scope>NUCLEOTIDE SEQUENCE [LARGE SCALE GENOMIC DNA]</scope>
    <source>
        <strain>JLS</strain>
    </source>
</reference>
<name>UREG_MYCSJ</name>
<keyword id="KW-0143">Chaperone</keyword>
<keyword id="KW-0963">Cytoplasm</keyword>
<keyword id="KW-0342">GTP-binding</keyword>
<keyword id="KW-0996">Nickel insertion</keyword>
<keyword id="KW-0547">Nucleotide-binding</keyword>
<proteinExistence type="inferred from homology"/>
<dbReference type="EMBL" id="CP000580">
    <property type="protein sequence ID" value="ABN98610.1"/>
    <property type="molecule type" value="Genomic_DNA"/>
</dbReference>
<dbReference type="SMR" id="A3Q0D3"/>
<dbReference type="KEGG" id="mjl:Mjls_2830"/>
<dbReference type="HOGENOM" id="CLU_072144_1_0_11"/>
<dbReference type="BioCyc" id="MSP164757:G1G8C-2849-MONOMER"/>
<dbReference type="GO" id="GO:0005737">
    <property type="term" value="C:cytoplasm"/>
    <property type="evidence" value="ECO:0007669"/>
    <property type="project" value="UniProtKB-SubCell"/>
</dbReference>
<dbReference type="GO" id="GO:0005525">
    <property type="term" value="F:GTP binding"/>
    <property type="evidence" value="ECO:0007669"/>
    <property type="project" value="UniProtKB-KW"/>
</dbReference>
<dbReference type="GO" id="GO:0003924">
    <property type="term" value="F:GTPase activity"/>
    <property type="evidence" value="ECO:0007669"/>
    <property type="project" value="InterPro"/>
</dbReference>
<dbReference type="GO" id="GO:0016151">
    <property type="term" value="F:nickel cation binding"/>
    <property type="evidence" value="ECO:0007669"/>
    <property type="project" value="UniProtKB-UniRule"/>
</dbReference>
<dbReference type="GO" id="GO:0043419">
    <property type="term" value="P:urea catabolic process"/>
    <property type="evidence" value="ECO:0007669"/>
    <property type="project" value="InterPro"/>
</dbReference>
<dbReference type="CDD" id="cd05540">
    <property type="entry name" value="UreG"/>
    <property type="match status" value="1"/>
</dbReference>
<dbReference type="FunFam" id="3.40.50.300:FF:000208">
    <property type="entry name" value="Urease accessory protein UreG"/>
    <property type="match status" value="1"/>
</dbReference>
<dbReference type="Gene3D" id="3.40.50.300">
    <property type="entry name" value="P-loop containing nucleotide triphosphate hydrolases"/>
    <property type="match status" value="1"/>
</dbReference>
<dbReference type="HAMAP" id="MF_01389">
    <property type="entry name" value="UreG"/>
    <property type="match status" value="1"/>
</dbReference>
<dbReference type="InterPro" id="IPR003495">
    <property type="entry name" value="CobW/HypB/UreG_nucleotide-bd"/>
</dbReference>
<dbReference type="InterPro" id="IPR027417">
    <property type="entry name" value="P-loop_NTPase"/>
</dbReference>
<dbReference type="InterPro" id="IPR004400">
    <property type="entry name" value="UreG"/>
</dbReference>
<dbReference type="NCBIfam" id="TIGR00101">
    <property type="entry name" value="ureG"/>
    <property type="match status" value="1"/>
</dbReference>
<dbReference type="PANTHER" id="PTHR31715">
    <property type="entry name" value="UREASE ACCESSORY PROTEIN G"/>
    <property type="match status" value="1"/>
</dbReference>
<dbReference type="PANTHER" id="PTHR31715:SF0">
    <property type="entry name" value="UREASE ACCESSORY PROTEIN G"/>
    <property type="match status" value="1"/>
</dbReference>
<dbReference type="Pfam" id="PF02492">
    <property type="entry name" value="cobW"/>
    <property type="match status" value="1"/>
</dbReference>
<dbReference type="PIRSF" id="PIRSF005624">
    <property type="entry name" value="Ni-bind_GTPase"/>
    <property type="match status" value="1"/>
</dbReference>
<dbReference type="SUPFAM" id="SSF52540">
    <property type="entry name" value="P-loop containing nucleoside triphosphate hydrolases"/>
    <property type="match status" value="1"/>
</dbReference>
<gene>
    <name evidence="1" type="primary">ureG</name>
    <name type="ordered locus">Mjls_2830</name>
</gene>
<sequence>MPPHFLSADSTGQPHRHADRPKRVRTPGEPLRIGVGGPVGSGKTALVAALCRQLRDELSLAVLTNDIYTTEDADFLRRHAVLPDDRIAAVQTGGCPHTAIRDDITANLDAIDDLVAGHDHLDLILVESGGDNLTATFSSGLVDVQIFVVDVAGGDKVPRKGGPGVTFSDLLVINKTDLAPMVGADLDVMRRDSTKVRGERPFVLISLTADPTAGPVLDWVRAQLRVPVQG</sequence>